<accession>P31854</accession>
<accession>Q7T1D5</accession>
<name>PA2B_VIPBB</name>
<comment type="function">
    <text evidence="4">Snake venom phospholipase A2 (PLA2) that exhibits medium anticoagulant effects by binding to factor Xa (F10) and inhibiting the prothrombinase activity (IC(50) is 90 nM). PLA2 catalyzes the calcium-dependent hydrolysis of the 2-acyl groups in 3-sn-phosphoglycerides.</text>
</comment>
<comment type="catalytic activity">
    <reaction evidence="2 3">
        <text>a 1,2-diacyl-sn-glycero-3-phosphocholine + H2O = a 1-acyl-sn-glycero-3-phosphocholine + a fatty acid + H(+)</text>
        <dbReference type="Rhea" id="RHEA:15801"/>
        <dbReference type="ChEBI" id="CHEBI:15377"/>
        <dbReference type="ChEBI" id="CHEBI:15378"/>
        <dbReference type="ChEBI" id="CHEBI:28868"/>
        <dbReference type="ChEBI" id="CHEBI:57643"/>
        <dbReference type="ChEBI" id="CHEBI:58168"/>
        <dbReference type="EC" id="3.1.1.4"/>
    </reaction>
</comment>
<comment type="cofactor">
    <cofactor evidence="1">
        <name>Ca(2+)</name>
        <dbReference type="ChEBI" id="CHEBI:29108"/>
    </cofactor>
    <text evidence="1">Binds 1 Ca(2+) ion.</text>
</comment>
<comment type="subcellular location">
    <subcellularLocation>
        <location evidence="5">Secreted</location>
    </subcellularLocation>
</comment>
<comment type="tissue specificity">
    <text evidence="9">Expressed by the venom gland.</text>
</comment>
<comment type="toxic dose">
    <text evidence="5">LD(50) is 0.95 mg/kg by intraperitoneal injection.</text>
</comment>
<comment type="miscellaneous">
    <text evidence="9">Is not neurotoxic.</text>
</comment>
<comment type="similarity">
    <text evidence="8">Belongs to the phospholipase A2 family. Group II subfamily. D49 sub-subfamily.</text>
</comment>
<sequence>MRTLWIVAVWLMGVEGNLFQFGNMINHMVGKHAVWSYLSYGCYCGWGGQGKPQDATDRCCFVHDCCYGRANGCDPKLSTYSYNFQNGNIVCGNKYGCLRHICECDRVAAICFQKNMNTYNKKYKNYSSSNCQENSDKC</sequence>
<dbReference type="EC" id="3.1.1.4"/>
<dbReference type="EMBL" id="AY158636">
    <property type="protein sequence ID" value="AAN59982.1"/>
    <property type="molecule type" value="Genomic_DNA"/>
</dbReference>
<dbReference type="PIR" id="S33267">
    <property type="entry name" value="S33267"/>
</dbReference>
<dbReference type="SMR" id="P31854"/>
<dbReference type="GO" id="GO:0005576">
    <property type="term" value="C:extracellular region"/>
    <property type="evidence" value="ECO:0007669"/>
    <property type="project" value="UniProtKB-SubCell"/>
</dbReference>
<dbReference type="GO" id="GO:0005509">
    <property type="term" value="F:calcium ion binding"/>
    <property type="evidence" value="ECO:0007669"/>
    <property type="project" value="InterPro"/>
</dbReference>
<dbReference type="GO" id="GO:0047498">
    <property type="term" value="F:calcium-dependent phospholipase A2 activity"/>
    <property type="evidence" value="ECO:0007669"/>
    <property type="project" value="TreeGrafter"/>
</dbReference>
<dbReference type="GO" id="GO:0005543">
    <property type="term" value="F:phospholipid binding"/>
    <property type="evidence" value="ECO:0007669"/>
    <property type="project" value="TreeGrafter"/>
</dbReference>
<dbReference type="GO" id="GO:0090729">
    <property type="term" value="F:toxin activity"/>
    <property type="evidence" value="ECO:0007669"/>
    <property type="project" value="UniProtKB-KW"/>
</dbReference>
<dbReference type="GO" id="GO:0050482">
    <property type="term" value="P:arachidonate secretion"/>
    <property type="evidence" value="ECO:0007669"/>
    <property type="project" value="InterPro"/>
</dbReference>
<dbReference type="GO" id="GO:0016042">
    <property type="term" value="P:lipid catabolic process"/>
    <property type="evidence" value="ECO:0007669"/>
    <property type="project" value="UniProtKB-KW"/>
</dbReference>
<dbReference type="GO" id="GO:0006644">
    <property type="term" value="P:phospholipid metabolic process"/>
    <property type="evidence" value="ECO:0007669"/>
    <property type="project" value="InterPro"/>
</dbReference>
<dbReference type="CDD" id="cd00125">
    <property type="entry name" value="PLA2c"/>
    <property type="match status" value="1"/>
</dbReference>
<dbReference type="FunFam" id="1.20.90.10:FF:000001">
    <property type="entry name" value="Basic phospholipase A2 homolog"/>
    <property type="match status" value="1"/>
</dbReference>
<dbReference type="Gene3D" id="1.20.90.10">
    <property type="entry name" value="Phospholipase A2 domain"/>
    <property type="match status" value="1"/>
</dbReference>
<dbReference type="InterPro" id="IPR001211">
    <property type="entry name" value="PLipase_A2"/>
</dbReference>
<dbReference type="InterPro" id="IPR033112">
    <property type="entry name" value="PLipase_A2_Asp_AS"/>
</dbReference>
<dbReference type="InterPro" id="IPR016090">
    <property type="entry name" value="PLipase_A2_dom"/>
</dbReference>
<dbReference type="InterPro" id="IPR036444">
    <property type="entry name" value="PLipase_A2_dom_sf"/>
</dbReference>
<dbReference type="InterPro" id="IPR033113">
    <property type="entry name" value="PLipase_A2_His_AS"/>
</dbReference>
<dbReference type="PANTHER" id="PTHR11716:SF101">
    <property type="entry name" value="BASIC PHOSPHOLIPASE A2 PA-11-LIKE"/>
    <property type="match status" value="1"/>
</dbReference>
<dbReference type="PANTHER" id="PTHR11716">
    <property type="entry name" value="PHOSPHOLIPASE A2 FAMILY MEMBER"/>
    <property type="match status" value="1"/>
</dbReference>
<dbReference type="Pfam" id="PF00068">
    <property type="entry name" value="Phospholip_A2_1"/>
    <property type="match status" value="1"/>
</dbReference>
<dbReference type="PRINTS" id="PR00389">
    <property type="entry name" value="PHPHLIPASEA2"/>
</dbReference>
<dbReference type="SMART" id="SM00085">
    <property type="entry name" value="PA2c"/>
    <property type="match status" value="1"/>
</dbReference>
<dbReference type="SUPFAM" id="SSF48619">
    <property type="entry name" value="Phospholipase A2, PLA2"/>
    <property type="match status" value="1"/>
</dbReference>
<dbReference type="PROSITE" id="PS00119">
    <property type="entry name" value="PA2_ASP"/>
    <property type="match status" value="1"/>
</dbReference>
<dbReference type="PROSITE" id="PS00118">
    <property type="entry name" value="PA2_HIS"/>
    <property type="match status" value="1"/>
</dbReference>
<evidence type="ECO:0000250" key="1"/>
<evidence type="ECO:0000255" key="2">
    <source>
        <dbReference type="PROSITE-ProRule" id="PRU10035"/>
    </source>
</evidence>
<evidence type="ECO:0000255" key="3">
    <source>
        <dbReference type="PROSITE-ProRule" id="PRU10036"/>
    </source>
</evidence>
<evidence type="ECO:0000269" key="4">
    <source>
    </source>
</evidence>
<evidence type="ECO:0000269" key="5">
    <source>
    </source>
</evidence>
<evidence type="ECO:0000303" key="6">
    <source>
    </source>
</evidence>
<evidence type="ECO:0000303" key="7">
    <source>
    </source>
</evidence>
<evidence type="ECO:0000305" key="8"/>
<evidence type="ECO:0000305" key="9">
    <source>
    </source>
</evidence>
<keyword id="KW-1203">Blood coagulation cascade inhibiting toxin</keyword>
<keyword id="KW-0106">Calcium</keyword>
<keyword id="KW-0903">Direct protein sequencing</keyword>
<keyword id="KW-1015">Disulfide bond</keyword>
<keyword id="KW-1199">Hemostasis impairing toxin</keyword>
<keyword id="KW-0378">Hydrolase</keyword>
<keyword id="KW-0442">Lipid degradation</keyword>
<keyword id="KW-0443">Lipid metabolism</keyword>
<keyword id="KW-0479">Metal-binding</keyword>
<keyword id="KW-0964">Secreted</keyword>
<keyword id="KW-0732">Signal</keyword>
<keyword id="KW-0800">Toxin</keyword>
<organism>
    <name type="scientific">Vipera berus berus</name>
    <name type="common">Common viper</name>
    <dbReference type="NCBI Taxonomy" id="31156"/>
    <lineage>
        <taxon>Eukaryota</taxon>
        <taxon>Metazoa</taxon>
        <taxon>Chordata</taxon>
        <taxon>Craniata</taxon>
        <taxon>Vertebrata</taxon>
        <taxon>Euteleostomi</taxon>
        <taxon>Lepidosauria</taxon>
        <taxon>Squamata</taxon>
        <taxon>Bifurcata</taxon>
        <taxon>Unidentata</taxon>
        <taxon>Episquamata</taxon>
        <taxon>Toxicofera</taxon>
        <taxon>Serpentes</taxon>
        <taxon>Colubroidea</taxon>
        <taxon>Viperidae</taxon>
        <taxon>Viperinae</taxon>
        <taxon>Vipera</taxon>
    </lineage>
</organism>
<protein>
    <recommendedName>
        <fullName>Basic phospholipase A2 Pla2Vb</fullName>
        <shortName evidence="7">VbbPLA2</shortName>
        <shortName evidence="6">svPLA2</shortName>
        <ecNumber>3.1.1.4</ecNumber>
    </recommendedName>
    <alternativeName>
        <fullName>Phosphatidylcholine 2-acylhydrolase</fullName>
    </alternativeName>
</protein>
<proteinExistence type="evidence at protein level"/>
<feature type="signal peptide" evidence="5">
    <location>
        <begin position="1"/>
        <end position="16"/>
    </location>
</feature>
<feature type="chain" id="PRO_0000161719" description="Basic phospholipase A2 Pla2Vb">
    <location>
        <begin position="17"/>
        <end position="138"/>
    </location>
</feature>
<feature type="active site" evidence="1">
    <location>
        <position position="63"/>
    </location>
</feature>
<feature type="active site" evidence="1">
    <location>
        <position position="105"/>
    </location>
</feature>
<feature type="binding site" evidence="1">
    <location>
        <position position="43"/>
    </location>
    <ligand>
        <name>Ca(2+)</name>
        <dbReference type="ChEBI" id="CHEBI:29108"/>
    </ligand>
</feature>
<feature type="binding site" evidence="1">
    <location>
        <position position="45"/>
    </location>
    <ligand>
        <name>Ca(2+)</name>
        <dbReference type="ChEBI" id="CHEBI:29108"/>
    </ligand>
</feature>
<feature type="binding site" evidence="1">
    <location>
        <position position="47"/>
    </location>
    <ligand>
        <name>Ca(2+)</name>
        <dbReference type="ChEBI" id="CHEBI:29108"/>
    </ligand>
</feature>
<feature type="binding site" evidence="1">
    <location>
        <position position="64"/>
    </location>
    <ligand>
        <name>Ca(2+)</name>
        <dbReference type="ChEBI" id="CHEBI:29108"/>
    </ligand>
</feature>
<feature type="disulfide bond" evidence="1">
    <location>
        <begin position="42"/>
        <end position="131"/>
    </location>
</feature>
<feature type="disulfide bond" evidence="1">
    <location>
        <begin position="44"/>
        <end position="60"/>
    </location>
</feature>
<feature type="disulfide bond" evidence="1">
    <location>
        <begin position="59"/>
        <end position="111"/>
    </location>
</feature>
<feature type="disulfide bond" evidence="1">
    <location>
        <begin position="65"/>
        <end position="138"/>
    </location>
</feature>
<feature type="disulfide bond" evidence="1">
    <location>
        <begin position="66"/>
        <end position="104"/>
    </location>
</feature>
<feature type="disulfide bond" evidence="1">
    <location>
        <begin position="73"/>
        <end position="97"/>
    </location>
</feature>
<feature type="disulfide bond" evidence="1">
    <location>
        <begin position="91"/>
        <end position="102"/>
    </location>
</feature>
<feature type="sequence conflict" description="In Ref. 2; AA sequence." evidence="8" ref="2">
    <original>D</original>
    <variation>N</variation>
    <location>
        <position position="136"/>
    </location>
</feature>
<reference key="1">
    <citation type="journal article" date="2003" name="Eur. J. Biochem.">
        <title>Sequences and structural organization of phospholipase A2 genes from Vipera aspis aspis, V. aspis zinnikeri and Vipera berus berus venom. Identification of the origin of a new viper population based on ammodytin I1 heterogeneity.</title>
        <authorList>
            <person name="Guillemin I."/>
            <person name="Bouchier C."/>
            <person name="Garrigues T."/>
            <person name="Wisner A."/>
            <person name="Choumet V."/>
        </authorList>
    </citation>
    <scope>NUCLEOTIDE SEQUENCE [GENOMIC DNA]</scope>
</reference>
<reference key="2">
    <citation type="journal article" date="1993" name="Biochim. Biophys. Acta">
        <title>Isolation, partial characterization and complete amino acid sequence of the toxic phospholipase A2 from the venom of the common viper, Vipera berus berus.</title>
        <authorList>
            <person name="Krizaj I."/>
            <person name="Siigur J."/>
            <person name="Samel M."/>
            <person name="Cotic V."/>
            <person name="Gubensek F."/>
        </authorList>
    </citation>
    <scope>PROTEIN SEQUENCE OF 17-138</scope>
    <scope>TOXIC DOSE</scope>
    <scope>SUBCELLULAR LOCATION</scope>
    <source>
        <tissue>Venom</tissue>
    </source>
</reference>
<reference key="3">
    <citation type="journal article" date="2007" name="BMC Struct. Biol.">
        <title>Characterization of a human coagulation factor Xa-binding site on Viperidae snake venom phospholipases A2 by affinity binding studies and molecular bioinformatics.</title>
        <authorList>
            <person name="Faure G."/>
            <person name="Gowda V.T."/>
            <person name="Maroun R.C."/>
        </authorList>
    </citation>
    <scope>FUNCTION AS AN ANTICOAGULANT</scope>
    <scope>3D-STRUCTURE MODELING</scope>
</reference>